<evidence type="ECO:0000255" key="1">
    <source>
        <dbReference type="HAMAP-Rule" id="MF_00601"/>
    </source>
</evidence>
<keyword id="KW-1283">Bacterial microcompartment</keyword>
<keyword id="KW-0846">Cobalamin</keyword>
<keyword id="KW-0170">Cobalt</keyword>
<keyword id="KW-0456">Lyase</keyword>
<proteinExistence type="inferred from homology"/>
<reference key="1">
    <citation type="journal article" date="2004" name="Nucleic Acids Res.">
        <title>Whole genome comparisons of serotype 4b and 1/2a strains of the food-borne pathogen Listeria monocytogenes reveal new insights into the core genome components of this species.</title>
        <authorList>
            <person name="Nelson K.E."/>
            <person name="Fouts D.E."/>
            <person name="Mongodin E.F."/>
            <person name="Ravel J."/>
            <person name="DeBoy R.T."/>
            <person name="Kolonay J.F."/>
            <person name="Rasko D.A."/>
            <person name="Angiuoli S.V."/>
            <person name="Gill S.R."/>
            <person name="Paulsen I.T."/>
            <person name="Peterson J.D."/>
            <person name="White O."/>
            <person name="Nelson W.C."/>
            <person name="Nierman W.C."/>
            <person name="Beanan M.J."/>
            <person name="Brinkac L.M."/>
            <person name="Daugherty S.C."/>
            <person name="Dodson R.J."/>
            <person name="Durkin A.S."/>
            <person name="Madupu R."/>
            <person name="Haft D.H."/>
            <person name="Selengut J."/>
            <person name="Van Aken S.E."/>
            <person name="Khouri H.M."/>
            <person name="Fedorova N."/>
            <person name="Forberger H.A."/>
            <person name="Tran B."/>
            <person name="Kathariou S."/>
            <person name="Wonderling L.D."/>
            <person name="Uhlich G.A."/>
            <person name="Bayles D.O."/>
            <person name="Luchansky J.B."/>
            <person name="Fraser C.M."/>
        </authorList>
    </citation>
    <scope>NUCLEOTIDE SEQUENCE [LARGE SCALE GENOMIC DNA]</scope>
    <source>
        <strain>F2365</strain>
    </source>
</reference>
<feature type="chain" id="PRO_0000205994" description="Ethanolamine ammonia-lyase small subunit">
    <location>
        <begin position="1"/>
        <end position="293"/>
    </location>
</feature>
<feature type="binding site" evidence="1">
    <location>
        <position position="207"/>
    </location>
    <ligand>
        <name>adenosylcob(III)alamin</name>
        <dbReference type="ChEBI" id="CHEBI:18408"/>
    </ligand>
</feature>
<feature type="binding site" evidence="1">
    <location>
        <position position="228"/>
    </location>
    <ligand>
        <name>adenosylcob(III)alamin</name>
        <dbReference type="ChEBI" id="CHEBI:18408"/>
    </ligand>
</feature>
<protein>
    <recommendedName>
        <fullName evidence="1">Ethanolamine ammonia-lyase small subunit</fullName>
        <shortName evidence="1">EAL small subunit</shortName>
        <ecNumber evidence="1">4.3.1.7</ecNumber>
    </recommendedName>
</protein>
<dbReference type="EC" id="4.3.1.7" evidence="1"/>
<dbReference type="EMBL" id="AE017262">
    <property type="protein sequence ID" value="AAT03962.1"/>
    <property type="molecule type" value="Genomic_DNA"/>
</dbReference>
<dbReference type="RefSeq" id="WP_003724715.1">
    <property type="nucleotide sequence ID" value="NC_002973.6"/>
</dbReference>
<dbReference type="SMR" id="Q720Q2"/>
<dbReference type="DNASU" id="2799020"/>
<dbReference type="KEGG" id="lmf:LMOf2365_1186"/>
<dbReference type="HOGENOM" id="CLU_068224_0_0_9"/>
<dbReference type="BRENDA" id="4.3.1.7">
    <property type="organism ID" value="3045"/>
</dbReference>
<dbReference type="UniPathway" id="UPA00560"/>
<dbReference type="GO" id="GO:0009350">
    <property type="term" value="C:ethanolamine ammonia-lyase complex"/>
    <property type="evidence" value="ECO:0007669"/>
    <property type="project" value="UniProtKB-UniRule"/>
</dbReference>
<dbReference type="GO" id="GO:0031471">
    <property type="term" value="C:ethanolamine degradation polyhedral organelle"/>
    <property type="evidence" value="ECO:0007669"/>
    <property type="project" value="UniProtKB-UniRule"/>
</dbReference>
<dbReference type="GO" id="GO:0031419">
    <property type="term" value="F:cobalamin binding"/>
    <property type="evidence" value="ECO:0007669"/>
    <property type="project" value="UniProtKB-UniRule"/>
</dbReference>
<dbReference type="GO" id="GO:0008851">
    <property type="term" value="F:ethanolamine ammonia-lyase activity"/>
    <property type="evidence" value="ECO:0007669"/>
    <property type="project" value="UniProtKB-UniRule"/>
</dbReference>
<dbReference type="GO" id="GO:0006520">
    <property type="term" value="P:amino acid metabolic process"/>
    <property type="evidence" value="ECO:0007669"/>
    <property type="project" value="InterPro"/>
</dbReference>
<dbReference type="GO" id="GO:0046336">
    <property type="term" value="P:ethanolamine catabolic process"/>
    <property type="evidence" value="ECO:0007669"/>
    <property type="project" value="UniProtKB-UniRule"/>
</dbReference>
<dbReference type="FunFam" id="1.10.30.40:FF:000001">
    <property type="entry name" value="Ethanolamine ammonia-lyase light chain"/>
    <property type="match status" value="1"/>
</dbReference>
<dbReference type="FunFam" id="3.40.50.11240:FF:000001">
    <property type="entry name" value="Ethanolamine ammonia-lyase light chain"/>
    <property type="match status" value="1"/>
</dbReference>
<dbReference type="Gene3D" id="3.40.50.11240">
    <property type="entry name" value="Ethanolamine ammonia-lyase light chain (EutC)"/>
    <property type="match status" value="1"/>
</dbReference>
<dbReference type="Gene3D" id="1.10.30.40">
    <property type="entry name" value="Ethanolamine ammonia-lyase light chain (EutC), N-terminal domain"/>
    <property type="match status" value="1"/>
</dbReference>
<dbReference type="HAMAP" id="MF_00601">
    <property type="entry name" value="EutC"/>
    <property type="match status" value="1"/>
</dbReference>
<dbReference type="InterPro" id="IPR009246">
    <property type="entry name" value="EutC"/>
</dbReference>
<dbReference type="InterPro" id="IPR042251">
    <property type="entry name" value="EutC_C"/>
</dbReference>
<dbReference type="InterPro" id="IPR042255">
    <property type="entry name" value="EutC_N"/>
</dbReference>
<dbReference type="NCBIfam" id="NF003971">
    <property type="entry name" value="PRK05465.1"/>
    <property type="match status" value="1"/>
</dbReference>
<dbReference type="PANTHER" id="PTHR39330">
    <property type="entry name" value="ETHANOLAMINE AMMONIA-LYASE LIGHT CHAIN"/>
    <property type="match status" value="1"/>
</dbReference>
<dbReference type="PANTHER" id="PTHR39330:SF1">
    <property type="entry name" value="ETHANOLAMINE AMMONIA-LYASE SMALL SUBUNIT"/>
    <property type="match status" value="1"/>
</dbReference>
<dbReference type="Pfam" id="PF05985">
    <property type="entry name" value="EutC"/>
    <property type="match status" value="1"/>
</dbReference>
<dbReference type="PIRSF" id="PIRSF018982">
    <property type="entry name" value="EutC"/>
    <property type="match status" value="1"/>
</dbReference>
<gene>
    <name evidence="1" type="primary">eutC</name>
    <name type="ordered locus">LMOf2365_1186</name>
</gene>
<organism>
    <name type="scientific">Listeria monocytogenes serotype 4b (strain F2365)</name>
    <dbReference type="NCBI Taxonomy" id="265669"/>
    <lineage>
        <taxon>Bacteria</taxon>
        <taxon>Bacillati</taxon>
        <taxon>Bacillota</taxon>
        <taxon>Bacilli</taxon>
        <taxon>Bacillales</taxon>
        <taxon>Listeriaceae</taxon>
        <taxon>Listeria</taxon>
    </lineage>
</organism>
<sequence>MNEQELKQMIEGILTEMSGGKTTDTVAAAPTKSVVETVITEGSIPDITEVDIKKQLLVPEPADREGYLKMKQMTPARLGLWRAGPRYKTETILRFRADHAVAQDSVFSYVSEDLVKEMNFIPVNTKCQDKDEYLTRPDLGREFDNEMVEVIRANTTKNAKLQIVVGDGLSSAAIEANIKDILPSIKQGLKMYNLDFDNIIFVKHCRVPSMDQIGEITGADVVCLLVGERPGLVTAESMSAYIAYKPTIGMPEARRTVISNIHSGGTPPVEAGAYIAELIHNMLEKKCSGIDLK</sequence>
<accession>Q720Q2</accession>
<name>EUTC_LISMF</name>
<comment type="function">
    <text evidence="1">Catalyzes the deamination of various vicinal amino-alcohols to oxo compounds. Allows this organism to utilize ethanolamine as the sole source of nitrogen and carbon in the presence of external vitamin B12.</text>
</comment>
<comment type="catalytic activity">
    <reaction evidence="1">
        <text>ethanolamine = acetaldehyde + NH4(+)</text>
        <dbReference type="Rhea" id="RHEA:15313"/>
        <dbReference type="ChEBI" id="CHEBI:15343"/>
        <dbReference type="ChEBI" id="CHEBI:28938"/>
        <dbReference type="ChEBI" id="CHEBI:57603"/>
        <dbReference type="EC" id="4.3.1.7"/>
    </reaction>
</comment>
<comment type="cofactor">
    <cofactor evidence="1">
        <name>adenosylcob(III)alamin</name>
        <dbReference type="ChEBI" id="CHEBI:18408"/>
    </cofactor>
    <text evidence="1">Binds between the large and small subunits.</text>
</comment>
<comment type="pathway">
    <text evidence="1">Amine and polyamine degradation; ethanolamine degradation.</text>
</comment>
<comment type="subunit">
    <text evidence="1">The basic unit is a heterodimer which dimerizes to form tetramers. The heterotetramers trimerize; 6 large subunits form a core ring with 6 small subunits projecting outwards.</text>
</comment>
<comment type="subcellular location">
    <subcellularLocation>
        <location evidence="1">Bacterial microcompartment</location>
    </subcellularLocation>
</comment>
<comment type="similarity">
    <text evidence="1">Belongs to the EutC family.</text>
</comment>